<dbReference type="EMBL" id="AY261363">
    <property type="status" value="NOT_ANNOTATED_CDS"/>
    <property type="molecule type" value="Genomic_DNA"/>
</dbReference>
<dbReference type="SMR" id="P0CA17"/>
<dbReference type="Proteomes" id="UP000000859">
    <property type="component" value="Segment"/>
</dbReference>
<sequence length="111" mass="12933">MSFSECPLVISACKKFLQKRITIENEALINALITALAQTTTLNDLCLLPIQTYLLSYKNAFEWIHFVCIAITTILDSKYNWKDCTVDINYIFLHVTYIYNIKTKEYLDYCS</sequence>
<gene>
    <name type="ordered locus">Pret-147</name>
</gene>
<organismHost>
    <name type="scientific">Ornithodoros</name>
    <name type="common">relapsing fever ticks</name>
    <dbReference type="NCBI Taxonomy" id="6937"/>
</organismHost>
<organismHost>
    <name type="scientific">Phacochoerus aethiopicus</name>
    <name type="common">Warthog</name>
    <dbReference type="NCBI Taxonomy" id="85517"/>
</organismHost>
<organismHost>
    <name type="scientific">Phacochoerus africanus</name>
    <name type="common">Warthog</name>
    <dbReference type="NCBI Taxonomy" id="41426"/>
</organismHost>
<organismHost>
    <name type="scientific">Potamochoerus larvatus</name>
    <name type="common">Bushpig</name>
    <dbReference type="NCBI Taxonomy" id="273792"/>
</organismHost>
<organismHost>
    <name type="scientific">Sus scrofa</name>
    <name type="common">Pig</name>
    <dbReference type="NCBI Taxonomy" id="9823"/>
</organismHost>
<organism>
    <name type="scientific">African swine fever virus (isolate Tick/South Africa/Pretoriuskop Pr4/1996)</name>
    <name type="common">ASFV</name>
    <dbReference type="NCBI Taxonomy" id="561443"/>
    <lineage>
        <taxon>Viruses</taxon>
        <taxon>Varidnaviria</taxon>
        <taxon>Bamfordvirae</taxon>
        <taxon>Nucleocytoviricota</taxon>
        <taxon>Pokkesviricetes</taxon>
        <taxon>Asfuvirales</taxon>
        <taxon>Asfarviridae</taxon>
        <taxon>Asfivirus</taxon>
        <taxon>African swine fever virus</taxon>
    </lineage>
</organism>
<reference key="1">
    <citation type="submission" date="2003-03" db="EMBL/GenBank/DDBJ databases">
        <title>African swine fever virus genomes.</title>
        <authorList>
            <person name="Kutish G.F."/>
            <person name="Rock D.L."/>
        </authorList>
    </citation>
    <scope>NUCLEOTIDE SEQUENCE [GENOMIC DNA]</scope>
</reference>
<name>VF111_ASFP4</name>
<comment type="similarity">
    <text evidence="1">Belongs to the asfivirus E111R family.</text>
</comment>
<feature type="chain" id="PRO_0000373478" description="Uncharacterized protein E111R">
    <location>
        <begin position="1"/>
        <end position="111"/>
    </location>
</feature>
<evidence type="ECO:0000305" key="1"/>
<protein>
    <recommendedName>
        <fullName>Uncharacterized protein E111R</fullName>
        <shortName>pE111R</shortName>
    </recommendedName>
</protein>
<proteinExistence type="inferred from homology"/>
<accession>P0CA17</accession>